<organism>
    <name type="scientific">Actinobacillus pleuropneumoniae serotype 3 (strain JL03)</name>
    <dbReference type="NCBI Taxonomy" id="434271"/>
    <lineage>
        <taxon>Bacteria</taxon>
        <taxon>Pseudomonadati</taxon>
        <taxon>Pseudomonadota</taxon>
        <taxon>Gammaproteobacteria</taxon>
        <taxon>Pasteurellales</taxon>
        <taxon>Pasteurellaceae</taxon>
        <taxon>Actinobacillus</taxon>
    </lineage>
</organism>
<accession>B0BPI1</accession>
<proteinExistence type="inferred from homology"/>
<keyword id="KW-0963">Cytoplasm</keyword>
<dbReference type="EMBL" id="CP000687">
    <property type="protein sequence ID" value="ABY69466.1"/>
    <property type="molecule type" value="Genomic_DNA"/>
</dbReference>
<dbReference type="RefSeq" id="WP_005597424.1">
    <property type="nucleotide sequence ID" value="NC_010278.1"/>
</dbReference>
<dbReference type="SMR" id="B0BPI1"/>
<dbReference type="GeneID" id="48599082"/>
<dbReference type="KEGG" id="apj:APJL_0908"/>
<dbReference type="HOGENOM" id="CLU_055275_0_0_6"/>
<dbReference type="Proteomes" id="UP000008547">
    <property type="component" value="Chromosome"/>
</dbReference>
<dbReference type="GO" id="GO:0005829">
    <property type="term" value="C:cytosol"/>
    <property type="evidence" value="ECO:0007669"/>
    <property type="project" value="TreeGrafter"/>
</dbReference>
<dbReference type="GO" id="GO:0008199">
    <property type="term" value="F:ferric iron binding"/>
    <property type="evidence" value="ECO:0007669"/>
    <property type="project" value="TreeGrafter"/>
</dbReference>
<dbReference type="GO" id="GO:0051604">
    <property type="term" value="P:protein maturation"/>
    <property type="evidence" value="ECO:0007669"/>
    <property type="project" value="TreeGrafter"/>
</dbReference>
<dbReference type="CDD" id="cd16341">
    <property type="entry name" value="FdhE"/>
    <property type="match status" value="1"/>
</dbReference>
<dbReference type="FunFam" id="3.90.1670.10:FF:000001">
    <property type="entry name" value="Protein FdhE"/>
    <property type="match status" value="1"/>
</dbReference>
<dbReference type="Gene3D" id="3.90.1670.10">
    <property type="entry name" value="FdhE-like domain"/>
    <property type="match status" value="1"/>
</dbReference>
<dbReference type="HAMAP" id="MF_00611">
    <property type="entry name" value="FdeH"/>
    <property type="match status" value="1"/>
</dbReference>
<dbReference type="InterPro" id="IPR024064">
    <property type="entry name" value="FdhE-like_sf"/>
</dbReference>
<dbReference type="InterPro" id="IPR056796">
    <property type="entry name" value="FdhE_C"/>
</dbReference>
<dbReference type="InterPro" id="IPR056797">
    <property type="entry name" value="FdhE_central"/>
</dbReference>
<dbReference type="InterPro" id="IPR056774">
    <property type="entry name" value="FdhE_N"/>
</dbReference>
<dbReference type="InterPro" id="IPR006452">
    <property type="entry name" value="Formate_DH_accessory"/>
</dbReference>
<dbReference type="NCBIfam" id="TIGR01562">
    <property type="entry name" value="FdhE"/>
    <property type="match status" value="1"/>
</dbReference>
<dbReference type="NCBIfam" id="NF002925">
    <property type="entry name" value="PRK03564.1"/>
    <property type="match status" value="1"/>
</dbReference>
<dbReference type="PANTHER" id="PTHR37689">
    <property type="entry name" value="PROTEIN FDHE"/>
    <property type="match status" value="1"/>
</dbReference>
<dbReference type="PANTHER" id="PTHR37689:SF1">
    <property type="entry name" value="PROTEIN FDHE"/>
    <property type="match status" value="1"/>
</dbReference>
<dbReference type="Pfam" id="PF24860">
    <property type="entry name" value="FdhE_C"/>
    <property type="match status" value="1"/>
</dbReference>
<dbReference type="Pfam" id="PF24859">
    <property type="entry name" value="FdhE_central"/>
    <property type="match status" value="1"/>
</dbReference>
<dbReference type="Pfam" id="PF04216">
    <property type="entry name" value="FdhE_N"/>
    <property type="match status" value="1"/>
</dbReference>
<dbReference type="PIRSF" id="PIRSF018296">
    <property type="entry name" value="Format_dh_formtn"/>
    <property type="match status" value="1"/>
</dbReference>
<dbReference type="SUPFAM" id="SSF144020">
    <property type="entry name" value="FdhE-like"/>
    <property type="match status" value="1"/>
</dbReference>
<comment type="function">
    <text evidence="1">Necessary for formate dehydrogenase activity.</text>
</comment>
<comment type="subcellular location">
    <subcellularLocation>
        <location evidence="1">Cytoplasm</location>
    </subcellularLocation>
</comment>
<comment type="similarity">
    <text evidence="1">Belongs to the FdhE family.</text>
</comment>
<reference key="1">
    <citation type="journal article" date="2008" name="PLoS ONE">
        <title>Genome biology of Actinobacillus pleuropneumoniae JL03, an isolate of serotype 3 prevalent in China.</title>
        <authorList>
            <person name="Xu Z."/>
            <person name="Zhou Y."/>
            <person name="Li L."/>
            <person name="Zhou R."/>
            <person name="Xiao S."/>
            <person name="Wan Y."/>
            <person name="Zhang S."/>
            <person name="Wang K."/>
            <person name="Li W."/>
            <person name="Li L."/>
            <person name="Jin H."/>
            <person name="Kang M."/>
            <person name="Dalai B."/>
            <person name="Li T."/>
            <person name="Liu L."/>
            <person name="Cheng Y."/>
            <person name="Zhang L."/>
            <person name="Xu T."/>
            <person name="Zheng H."/>
            <person name="Pu S."/>
            <person name="Wang B."/>
            <person name="Gu W."/>
            <person name="Zhang X.L."/>
            <person name="Zhu G.-F."/>
            <person name="Wang S."/>
            <person name="Zhao G.-P."/>
            <person name="Chen H."/>
        </authorList>
    </citation>
    <scope>NUCLEOTIDE SEQUENCE [LARGE SCALE GENOMIC DNA]</scope>
    <source>
        <strain>JL03</strain>
    </source>
</reference>
<protein>
    <recommendedName>
        <fullName evidence="1">Protein FdhE homolog</fullName>
    </recommendedName>
</protein>
<evidence type="ECO:0000255" key="1">
    <source>
        <dbReference type="HAMAP-Rule" id="MF_00611"/>
    </source>
</evidence>
<feature type="chain" id="PRO_1000130352" description="Protein FdhE homolog">
    <location>
        <begin position="1"/>
        <end position="305"/>
    </location>
</feature>
<sequence>MSIRILPENEIKQAASSFQNPPLLFANPKNLYFRRAKRLRQLAENNPFGDYLEFAANLSEVQLDLLENHPIANYAEKLTACIEESNGQKPLNAKTFKRSSEWRELLLLLTEKFKPYANDTMLATIELLEKSSTSELEALADDLLNERYEAVGADKAVFLWAALSLYWTQLAQQLPRNTQTEVGERHTCPVCDSAPIVSVVHFGDTQGLRYLHCSLCESEWNMVRSQCSVCDQSGKLDYWSIDSVDAPVKAESCGDCESYLKVLYQEKDPHVEPVADDLGTLFLDAEMEQKGFARSGLNPFLFQVE</sequence>
<name>FDHE_ACTPJ</name>
<gene>
    <name evidence="1" type="primary">fdhE</name>
    <name type="ordered locus">APJL_0908</name>
</gene>